<accession>Q7FNT0</accession>
<keyword id="KW-0150">Chloroplast</keyword>
<keyword id="KW-0472">Membrane</keyword>
<keyword id="KW-0602">Photosynthesis</keyword>
<keyword id="KW-0604">Photosystem II</keyword>
<keyword id="KW-0934">Plastid</keyword>
<keyword id="KW-0674">Reaction center</keyword>
<keyword id="KW-0793">Thylakoid</keyword>
<keyword id="KW-0812">Transmembrane</keyword>
<keyword id="KW-1133">Transmembrane helix</keyword>
<organism>
    <name type="scientific">Atropa belladonna</name>
    <name type="common">Belladonna</name>
    <name type="synonym">Deadly nightshade</name>
    <dbReference type="NCBI Taxonomy" id="33113"/>
    <lineage>
        <taxon>Eukaryota</taxon>
        <taxon>Viridiplantae</taxon>
        <taxon>Streptophyta</taxon>
        <taxon>Embryophyta</taxon>
        <taxon>Tracheophyta</taxon>
        <taxon>Spermatophyta</taxon>
        <taxon>Magnoliopsida</taxon>
        <taxon>eudicotyledons</taxon>
        <taxon>Gunneridae</taxon>
        <taxon>Pentapetalae</taxon>
        <taxon>asterids</taxon>
        <taxon>lamiids</taxon>
        <taxon>Solanales</taxon>
        <taxon>Solanaceae</taxon>
        <taxon>Solanoideae</taxon>
        <taxon>Hyoscyameae</taxon>
        <taxon>Atropa</taxon>
    </lineage>
</organism>
<protein>
    <recommendedName>
        <fullName evidence="1">Photosystem II reaction center protein M</fullName>
        <shortName evidence="1">PSII-M</shortName>
    </recommendedName>
</protein>
<comment type="function">
    <text evidence="1">One of the components of the core complex of photosystem II (PSII). PSII is a light-driven water:plastoquinone oxidoreductase that uses light energy to abstract electrons from H(2)O, generating O(2) and a proton gradient subsequently used for ATP formation. It consists of a core antenna complex that captures photons, and an electron transfer chain that converts photonic excitation into a charge separation. This subunit is found at the monomer-monomer interface.</text>
</comment>
<comment type="subunit">
    <text evidence="1">PSII is composed of 1 copy each of membrane proteins PsbA, PsbB, PsbC, PsbD, PsbE, PsbF, PsbH, PsbI, PsbJ, PsbK, PsbL, PsbM, PsbT, PsbX, PsbY, PsbZ, Psb30/Ycf12, at least 3 peripheral proteins of the oxygen-evolving complex and a large number of cofactors. It forms dimeric complexes.</text>
</comment>
<comment type="subcellular location">
    <subcellularLocation>
        <location evidence="1">Plastid</location>
        <location evidence="1">Chloroplast thylakoid membrane</location>
        <topology evidence="1">Single-pass membrane protein</topology>
    </subcellularLocation>
</comment>
<comment type="similarity">
    <text evidence="1">Belongs to the PsbM family.</text>
</comment>
<name>PSBM_ATRBE</name>
<evidence type="ECO:0000255" key="1">
    <source>
        <dbReference type="HAMAP-Rule" id="MF_00438"/>
    </source>
</evidence>
<sequence length="34" mass="3783">MEVNILAFIATALFILVPTAFLLIIYVKTVSQND</sequence>
<feature type="chain" id="PRO_0000217550" description="Photosystem II reaction center protein M">
    <location>
        <begin position="1"/>
        <end position="34"/>
    </location>
</feature>
<feature type="transmembrane region" description="Helical" evidence="1">
    <location>
        <begin position="5"/>
        <end position="25"/>
    </location>
</feature>
<proteinExistence type="inferred from homology"/>
<gene>
    <name evidence="1" type="primary">psbM</name>
</gene>
<dbReference type="EMBL" id="AJ316582">
    <property type="protein sequence ID" value="CAC88038.1"/>
    <property type="molecule type" value="Genomic_DNA"/>
</dbReference>
<dbReference type="RefSeq" id="NP_783226.1">
    <property type="nucleotide sequence ID" value="NC_004561.1"/>
</dbReference>
<dbReference type="SMR" id="Q7FNT0"/>
<dbReference type="GeneID" id="806473"/>
<dbReference type="GO" id="GO:0009535">
    <property type="term" value="C:chloroplast thylakoid membrane"/>
    <property type="evidence" value="ECO:0007669"/>
    <property type="project" value="UniProtKB-SubCell"/>
</dbReference>
<dbReference type="GO" id="GO:0009523">
    <property type="term" value="C:photosystem II"/>
    <property type="evidence" value="ECO:0007669"/>
    <property type="project" value="UniProtKB-KW"/>
</dbReference>
<dbReference type="GO" id="GO:0019684">
    <property type="term" value="P:photosynthesis, light reaction"/>
    <property type="evidence" value="ECO:0007669"/>
    <property type="project" value="InterPro"/>
</dbReference>
<dbReference type="HAMAP" id="MF_00438">
    <property type="entry name" value="PSII_PsbM"/>
    <property type="match status" value="1"/>
</dbReference>
<dbReference type="InterPro" id="IPR007826">
    <property type="entry name" value="PSII_PsbM"/>
</dbReference>
<dbReference type="InterPro" id="IPR037269">
    <property type="entry name" value="PSII_PsbM_sf"/>
</dbReference>
<dbReference type="NCBIfam" id="TIGR03038">
    <property type="entry name" value="PS_II_psbM"/>
    <property type="match status" value="1"/>
</dbReference>
<dbReference type="PANTHER" id="PTHR35774">
    <property type="entry name" value="PHOTOSYSTEM II REACTION CENTER PROTEIN M"/>
    <property type="match status" value="1"/>
</dbReference>
<dbReference type="PANTHER" id="PTHR35774:SF1">
    <property type="entry name" value="PHOTOSYSTEM II REACTION CENTER PROTEIN M"/>
    <property type="match status" value="1"/>
</dbReference>
<dbReference type="Pfam" id="PF05151">
    <property type="entry name" value="PsbM"/>
    <property type="match status" value="1"/>
</dbReference>
<dbReference type="SUPFAM" id="SSF161033">
    <property type="entry name" value="Photosystem II reaction center protein M, PsbM"/>
    <property type="match status" value="1"/>
</dbReference>
<geneLocation type="chloroplast"/>
<reference key="1">
    <citation type="journal article" date="2002" name="Mol. Biol. Evol.">
        <title>The plastid chromosome of Atropa belladonna and its comparison with that of Nicotiana tabacum: the role of RNA editing in generating divergence in the process of plant speciation.</title>
        <authorList>
            <person name="Schmitz-Linneweber C."/>
            <person name="Regel R."/>
            <person name="Du T.G."/>
            <person name="Hupfer H."/>
            <person name="Herrmann R.G."/>
            <person name="Maier R.M."/>
        </authorList>
    </citation>
    <scope>NUCLEOTIDE SEQUENCE [LARGE SCALE GENOMIC DNA]</scope>
    <source>
        <strain>cv. Ab5p(kan)</strain>
    </source>
</reference>